<dbReference type="EC" id="2.7.4.8" evidence="1"/>
<dbReference type="EMBL" id="CP000088">
    <property type="protein sequence ID" value="AAZ55100.1"/>
    <property type="molecule type" value="Genomic_DNA"/>
</dbReference>
<dbReference type="RefSeq" id="WP_011291509.1">
    <property type="nucleotide sequence ID" value="NC_007333.1"/>
</dbReference>
<dbReference type="SMR" id="Q47R17"/>
<dbReference type="STRING" id="269800.Tfu_1062"/>
<dbReference type="KEGG" id="tfu:Tfu_1062"/>
<dbReference type="eggNOG" id="COG0194">
    <property type="taxonomic scope" value="Bacteria"/>
</dbReference>
<dbReference type="HOGENOM" id="CLU_001715_1_1_11"/>
<dbReference type="OrthoDB" id="9808150at2"/>
<dbReference type="GO" id="GO:0005829">
    <property type="term" value="C:cytosol"/>
    <property type="evidence" value="ECO:0007669"/>
    <property type="project" value="TreeGrafter"/>
</dbReference>
<dbReference type="GO" id="GO:0005524">
    <property type="term" value="F:ATP binding"/>
    <property type="evidence" value="ECO:0007669"/>
    <property type="project" value="UniProtKB-UniRule"/>
</dbReference>
<dbReference type="GO" id="GO:0004385">
    <property type="term" value="F:guanylate kinase activity"/>
    <property type="evidence" value="ECO:0007669"/>
    <property type="project" value="UniProtKB-UniRule"/>
</dbReference>
<dbReference type="CDD" id="cd00071">
    <property type="entry name" value="GMPK"/>
    <property type="match status" value="1"/>
</dbReference>
<dbReference type="FunFam" id="3.30.63.10:FF:000002">
    <property type="entry name" value="Guanylate kinase 1"/>
    <property type="match status" value="1"/>
</dbReference>
<dbReference type="Gene3D" id="3.30.63.10">
    <property type="entry name" value="Guanylate Kinase phosphate binding domain"/>
    <property type="match status" value="1"/>
</dbReference>
<dbReference type="Gene3D" id="3.40.50.300">
    <property type="entry name" value="P-loop containing nucleotide triphosphate hydrolases"/>
    <property type="match status" value="2"/>
</dbReference>
<dbReference type="HAMAP" id="MF_00328">
    <property type="entry name" value="Guanylate_kinase"/>
    <property type="match status" value="1"/>
</dbReference>
<dbReference type="InterPro" id="IPR008145">
    <property type="entry name" value="GK/Ca_channel_bsu"/>
</dbReference>
<dbReference type="InterPro" id="IPR008144">
    <property type="entry name" value="Guanylate_kin-like_dom"/>
</dbReference>
<dbReference type="InterPro" id="IPR017665">
    <property type="entry name" value="Guanylate_kinase"/>
</dbReference>
<dbReference type="InterPro" id="IPR020590">
    <property type="entry name" value="Guanylate_kinase_CS"/>
</dbReference>
<dbReference type="InterPro" id="IPR027417">
    <property type="entry name" value="P-loop_NTPase"/>
</dbReference>
<dbReference type="NCBIfam" id="TIGR03263">
    <property type="entry name" value="guanyl_kin"/>
    <property type="match status" value="1"/>
</dbReference>
<dbReference type="PANTHER" id="PTHR23117:SF13">
    <property type="entry name" value="GUANYLATE KINASE"/>
    <property type="match status" value="1"/>
</dbReference>
<dbReference type="PANTHER" id="PTHR23117">
    <property type="entry name" value="GUANYLATE KINASE-RELATED"/>
    <property type="match status" value="1"/>
</dbReference>
<dbReference type="Pfam" id="PF00625">
    <property type="entry name" value="Guanylate_kin"/>
    <property type="match status" value="1"/>
</dbReference>
<dbReference type="SMART" id="SM00072">
    <property type="entry name" value="GuKc"/>
    <property type="match status" value="1"/>
</dbReference>
<dbReference type="SUPFAM" id="SSF52540">
    <property type="entry name" value="P-loop containing nucleoside triphosphate hydrolases"/>
    <property type="match status" value="1"/>
</dbReference>
<dbReference type="PROSITE" id="PS00856">
    <property type="entry name" value="GUANYLATE_KINASE_1"/>
    <property type="match status" value="1"/>
</dbReference>
<dbReference type="PROSITE" id="PS50052">
    <property type="entry name" value="GUANYLATE_KINASE_2"/>
    <property type="match status" value="1"/>
</dbReference>
<sequence>MPVESGAGNDQPKRLTVLSGPSGVGKSTVVKELRRRRPEVWLSVSVTTRPPRPGETDGVEYYFVDDAEFDRLVAENELLEWAEFAGNRYGTPREPVLKRLAAGQPVLLEIDLNGARQVRANMPDAFLVFLAPPSWEELVRRLTGRGTESPEVIQRRLETARIELAAEKEFDVTLVNTSVHEVCDELLALIAAPSTQ</sequence>
<proteinExistence type="inferred from homology"/>
<evidence type="ECO:0000255" key="1">
    <source>
        <dbReference type="HAMAP-Rule" id="MF_00328"/>
    </source>
</evidence>
<evidence type="ECO:0000256" key="2">
    <source>
        <dbReference type="SAM" id="MobiDB-lite"/>
    </source>
</evidence>
<gene>
    <name evidence="1" type="primary">gmk</name>
    <name type="ordered locus">Tfu_1062</name>
</gene>
<name>KGUA_THEFY</name>
<organism>
    <name type="scientific">Thermobifida fusca (strain YX)</name>
    <dbReference type="NCBI Taxonomy" id="269800"/>
    <lineage>
        <taxon>Bacteria</taxon>
        <taxon>Bacillati</taxon>
        <taxon>Actinomycetota</taxon>
        <taxon>Actinomycetes</taxon>
        <taxon>Streptosporangiales</taxon>
        <taxon>Nocardiopsidaceae</taxon>
        <taxon>Thermobifida</taxon>
    </lineage>
</organism>
<comment type="function">
    <text evidence="1">Essential for recycling GMP and indirectly, cGMP.</text>
</comment>
<comment type="catalytic activity">
    <reaction evidence="1">
        <text>GMP + ATP = GDP + ADP</text>
        <dbReference type="Rhea" id="RHEA:20780"/>
        <dbReference type="ChEBI" id="CHEBI:30616"/>
        <dbReference type="ChEBI" id="CHEBI:58115"/>
        <dbReference type="ChEBI" id="CHEBI:58189"/>
        <dbReference type="ChEBI" id="CHEBI:456216"/>
        <dbReference type="EC" id="2.7.4.8"/>
    </reaction>
</comment>
<comment type="subcellular location">
    <subcellularLocation>
        <location evidence="1">Cytoplasm</location>
    </subcellularLocation>
</comment>
<comment type="similarity">
    <text evidence="1">Belongs to the guanylate kinase family.</text>
</comment>
<accession>Q47R17</accession>
<keyword id="KW-0067">ATP-binding</keyword>
<keyword id="KW-0963">Cytoplasm</keyword>
<keyword id="KW-0418">Kinase</keyword>
<keyword id="KW-0547">Nucleotide-binding</keyword>
<keyword id="KW-0808">Transferase</keyword>
<feature type="chain" id="PRO_0000266427" description="Guanylate kinase">
    <location>
        <begin position="1"/>
        <end position="196"/>
    </location>
</feature>
<feature type="domain" description="Guanylate kinase-like" evidence="1">
    <location>
        <begin position="13"/>
        <end position="191"/>
    </location>
</feature>
<feature type="region of interest" description="Disordered" evidence="2">
    <location>
        <begin position="1"/>
        <end position="24"/>
    </location>
</feature>
<feature type="binding site" evidence="1">
    <location>
        <begin position="20"/>
        <end position="27"/>
    </location>
    <ligand>
        <name>ATP</name>
        <dbReference type="ChEBI" id="CHEBI:30616"/>
    </ligand>
</feature>
<protein>
    <recommendedName>
        <fullName evidence="1">Guanylate kinase</fullName>
        <ecNumber evidence="1">2.7.4.8</ecNumber>
    </recommendedName>
    <alternativeName>
        <fullName evidence="1">GMP kinase</fullName>
    </alternativeName>
</protein>
<reference key="1">
    <citation type="journal article" date="2007" name="J. Bacteriol.">
        <title>Genome sequence and analysis of the soil cellulolytic actinomycete Thermobifida fusca YX.</title>
        <authorList>
            <person name="Lykidis A."/>
            <person name="Mavromatis K."/>
            <person name="Ivanova N."/>
            <person name="Anderson I."/>
            <person name="Land M."/>
            <person name="DiBartolo G."/>
            <person name="Martinez M."/>
            <person name="Lapidus A."/>
            <person name="Lucas S."/>
            <person name="Copeland A."/>
            <person name="Richardson P."/>
            <person name="Wilson D.B."/>
            <person name="Kyrpides N."/>
        </authorList>
    </citation>
    <scope>NUCLEOTIDE SEQUENCE [LARGE SCALE GENOMIC DNA]</scope>
    <source>
        <strain>YX</strain>
    </source>
</reference>